<dbReference type="EC" id="1.5.1.7"/>
<dbReference type="EMBL" id="CM002236">
    <property type="protein sequence ID" value="EAA35741.1"/>
    <property type="molecule type" value="Genomic_DNA"/>
</dbReference>
<dbReference type="RefSeq" id="XP_964977.1">
    <property type="nucleotide sequence ID" value="XM_959884.3"/>
</dbReference>
<dbReference type="SMR" id="Q7SFX6"/>
<dbReference type="FunCoup" id="Q7SFX6">
    <property type="interactions" value="173"/>
</dbReference>
<dbReference type="STRING" id="367110.Q7SFX6"/>
<dbReference type="PaxDb" id="5141-EFNCRP00000002800"/>
<dbReference type="EnsemblFungi" id="EAA35741">
    <property type="protein sequence ID" value="EAA35741"/>
    <property type="gene ID" value="NCU03118"/>
</dbReference>
<dbReference type="GeneID" id="3881135"/>
<dbReference type="KEGG" id="ncr:NCU03118"/>
<dbReference type="VEuPathDB" id="FungiDB:NCU03118"/>
<dbReference type="HOGENOM" id="CLU_063085_0_0_1"/>
<dbReference type="InParanoid" id="Q7SFX6"/>
<dbReference type="OMA" id="YFFFSHT"/>
<dbReference type="OrthoDB" id="265306at2759"/>
<dbReference type="UniPathway" id="UPA00033">
    <property type="reaction ID" value="UER00034"/>
</dbReference>
<dbReference type="Proteomes" id="UP000001805">
    <property type="component" value="Chromosome 1, Linkage Group I"/>
</dbReference>
<dbReference type="GO" id="GO:0005737">
    <property type="term" value="C:cytoplasm"/>
    <property type="evidence" value="ECO:0000318"/>
    <property type="project" value="GO_Central"/>
</dbReference>
<dbReference type="GO" id="GO:0003729">
    <property type="term" value="F:mRNA binding"/>
    <property type="evidence" value="ECO:0007669"/>
    <property type="project" value="EnsemblFungi"/>
</dbReference>
<dbReference type="GO" id="GO:0004754">
    <property type="term" value="F:saccharopine dehydrogenase (NAD+, L-lysine-forming) activity"/>
    <property type="evidence" value="ECO:0007669"/>
    <property type="project" value="UniProtKB-EC"/>
</dbReference>
<dbReference type="GO" id="GO:0004753">
    <property type="term" value="F:saccharopine dehydrogenase activity"/>
    <property type="evidence" value="ECO:0000318"/>
    <property type="project" value="GO_Central"/>
</dbReference>
<dbReference type="GO" id="GO:0019878">
    <property type="term" value="P:lysine biosynthetic process via aminoadipic acid"/>
    <property type="evidence" value="ECO:0000318"/>
    <property type="project" value="GO_Central"/>
</dbReference>
<dbReference type="GO" id="GO:0016558">
    <property type="term" value="P:protein import into peroxisome matrix"/>
    <property type="evidence" value="ECO:0007669"/>
    <property type="project" value="EnsemblFungi"/>
</dbReference>
<dbReference type="CDD" id="cd12188">
    <property type="entry name" value="SDH"/>
    <property type="match status" value="1"/>
</dbReference>
<dbReference type="FunFam" id="3.40.50.720:FF:000217">
    <property type="entry name" value="Saccharopine dehydrogenase [NAD(+), L-lysine-forming]"/>
    <property type="match status" value="1"/>
</dbReference>
<dbReference type="FunFam" id="3.40.50.720:FF:000627">
    <property type="entry name" value="Saccharopine dehydrogenase [NAD(+), L-lysine-forming]"/>
    <property type="match status" value="1"/>
</dbReference>
<dbReference type="Gene3D" id="3.40.50.720">
    <property type="entry name" value="NAD(P)-binding Rossmann-like Domain"/>
    <property type="match status" value="1"/>
</dbReference>
<dbReference type="InterPro" id="IPR051168">
    <property type="entry name" value="AASS"/>
</dbReference>
<dbReference type="InterPro" id="IPR007886">
    <property type="entry name" value="AlaDH/PNT_N"/>
</dbReference>
<dbReference type="InterPro" id="IPR007698">
    <property type="entry name" value="AlaDH/PNT_NAD(H)-bd"/>
</dbReference>
<dbReference type="InterPro" id="IPR027281">
    <property type="entry name" value="Lys1"/>
</dbReference>
<dbReference type="InterPro" id="IPR036291">
    <property type="entry name" value="NAD(P)-bd_dom_sf"/>
</dbReference>
<dbReference type="PANTHER" id="PTHR11133">
    <property type="entry name" value="SACCHAROPINE DEHYDROGENASE"/>
    <property type="match status" value="1"/>
</dbReference>
<dbReference type="PANTHER" id="PTHR11133:SF23">
    <property type="entry name" value="SACCHAROPINE DEHYDROGENASE [NAD(+), L-LYSINE-FORMING]"/>
    <property type="match status" value="1"/>
</dbReference>
<dbReference type="Pfam" id="PF05222">
    <property type="entry name" value="AlaDh_PNT_N"/>
    <property type="match status" value="1"/>
</dbReference>
<dbReference type="PIRSF" id="PIRSF018250">
    <property type="entry name" value="Saccharopine_DH_Lys"/>
    <property type="match status" value="1"/>
</dbReference>
<dbReference type="SMART" id="SM01002">
    <property type="entry name" value="AlaDh_PNT_C"/>
    <property type="match status" value="1"/>
</dbReference>
<dbReference type="SMART" id="SM01003">
    <property type="entry name" value="AlaDh_PNT_N"/>
    <property type="match status" value="1"/>
</dbReference>
<dbReference type="SUPFAM" id="SSF52283">
    <property type="entry name" value="Formate/glycerate dehydrogenase catalytic domain-like"/>
    <property type="match status" value="1"/>
</dbReference>
<dbReference type="SUPFAM" id="SSF51735">
    <property type="entry name" value="NAD(P)-binding Rossmann-fold domains"/>
    <property type="match status" value="1"/>
</dbReference>
<evidence type="ECO:0000250" key="1">
    <source>
        <dbReference type="UniProtKB" id="P38998"/>
    </source>
</evidence>
<evidence type="ECO:0000305" key="2"/>
<evidence type="ECO:0000305" key="3">
    <source>
    </source>
</evidence>
<gene>
    <name type="primary">lys-4</name>
    <name type="ORF">NCU03118</name>
</gene>
<comment type="function">
    <text evidence="1">Catalyzes the NAD(+)-dependent cleavage of saccharopine to L-lysine and 2-oxoglutarate, the final step in the alpha-aminoadipate (AAA) pathway for lysin biosynthesis.</text>
</comment>
<comment type="catalytic activity">
    <reaction evidence="1">
        <text>L-saccharopine + NAD(+) + H2O = L-lysine + 2-oxoglutarate + NADH + H(+)</text>
        <dbReference type="Rhea" id="RHEA:12440"/>
        <dbReference type="ChEBI" id="CHEBI:15377"/>
        <dbReference type="ChEBI" id="CHEBI:15378"/>
        <dbReference type="ChEBI" id="CHEBI:16810"/>
        <dbReference type="ChEBI" id="CHEBI:32551"/>
        <dbReference type="ChEBI" id="CHEBI:57540"/>
        <dbReference type="ChEBI" id="CHEBI:57945"/>
        <dbReference type="ChEBI" id="CHEBI:57951"/>
        <dbReference type="EC" id="1.5.1.7"/>
    </reaction>
</comment>
<comment type="pathway">
    <text evidence="3">Amino-acid biosynthesis; L-lysine biosynthesis via AAA pathway; L-lysine from L-alpha-aminoadipate (fungal route): step 3/3.</text>
</comment>
<comment type="subunit">
    <text evidence="1">Monomer.</text>
</comment>
<comment type="similarity">
    <text evidence="2">Belongs to the AlaDH/PNT family.</text>
</comment>
<keyword id="KW-0028">Amino-acid biosynthesis</keyword>
<keyword id="KW-1015">Disulfide bond</keyword>
<keyword id="KW-0457">Lysine biosynthesis</keyword>
<keyword id="KW-0520">NAD</keyword>
<keyword id="KW-0560">Oxidoreductase</keyword>
<keyword id="KW-1185">Reference proteome</keyword>
<proteinExistence type="inferred from homology"/>
<name>LYS1_NEUCR</name>
<organism>
    <name type="scientific">Neurospora crassa (strain ATCC 24698 / 74-OR23-1A / CBS 708.71 / DSM 1257 / FGSC 987)</name>
    <dbReference type="NCBI Taxonomy" id="367110"/>
    <lineage>
        <taxon>Eukaryota</taxon>
        <taxon>Fungi</taxon>
        <taxon>Dikarya</taxon>
        <taxon>Ascomycota</taxon>
        <taxon>Pezizomycotina</taxon>
        <taxon>Sordariomycetes</taxon>
        <taxon>Sordariomycetidae</taxon>
        <taxon>Sordariales</taxon>
        <taxon>Sordariaceae</taxon>
        <taxon>Neurospora</taxon>
    </lineage>
</organism>
<feature type="chain" id="PRO_0000199013" description="Saccharopine dehydrogenase [NAD(+), L-lysine-forming]">
    <location>
        <begin position="1"/>
        <end position="372"/>
    </location>
</feature>
<feature type="active site" description="Proton acceptor" evidence="1">
    <location>
        <position position="77"/>
    </location>
</feature>
<feature type="active site" description="Proton donor" evidence="1">
    <location>
        <position position="95"/>
    </location>
</feature>
<feature type="binding site" evidence="1">
    <location>
        <position position="18"/>
    </location>
    <ligand>
        <name>L-saccharopine</name>
        <dbReference type="ChEBI" id="CHEBI:57951"/>
    </ligand>
</feature>
<feature type="binding site" evidence="1">
    <location>
        <position position="77"/>
    </location>
    <ligand>
        <name>L-saccharopine</name>
        <dbReference type="ChEBI" id="CHEBI:57951"/>
    </ligand>
</feature>
<feature type="binding site" evidence="1">
    <location>
        <position position="100"/>
    </location>
    <ligand>
        <name>L-saccharopine</name>
        <dbReference type="ChEBI" id="CHEBI:57951"/>
    </ligand>
</feature>
<feature type="binding site" evidence="1">
    <location>
        <position position="129"/>
    </location>
    <ligand>
        <name>NAD(+)</name>
        <dbReference type="ChEBI" id="CHEBI:57540"/>
    </ligand>
</feature>
<feature type="binding site" evidence="1">
    <location>
        <position position="130"/>
    </location>
    <ligand>
        <name>L-saccharopine</name>
        <dbReference type="ChEBI" id="CHEBI:57951"/>
    </ligand>
</feature>
<feature type="binding site" evidence="1">
    <location>
        <position position="134"/>
    </location>
    <ligand>
        <name>L-saccharopine</name>
        <dbReference type="ChEBI" id="CHEBI:57951"/>
    </ligand>
</feature>
<feature type="binding site" evidence="1">
    <location>
        <begin position="200"/>
        <end position="201"/>
    </location>
    <ligand>
        <name>NAD(+)</name>
        <dbReference type="ChEBI" id="CHEBI:57540"/>
    </ligand>
</feature>
<feature type="binding site" evidence="1">
    <location>
        <position position="224"/>
    </location>
    <ligand>
        <name>NAD(+)</name>
        <dbReference type="ChEBI" id="CHEBI:57540"/>
    </ligand>
</feature>
<feature type="binding site" evidence="1">
    <location>
        <position position="228"/>
    </location>
    <ligand>
        <name>NAD(+)</name>
        <dbReference type="ChEBI" id="CHEBI:57540"/>
    </ligand>
</feature>
<feature type="binding site" evidence="1">
    <location>
        <position position="248"/>
    </location>
    <ligand>
        <name>NAD(+)</name>
        <dbReference type="ChEBI" id="CHEBI:57540"/>
    </ligand>
</feature>
<feature type="binding site" evidence="1">
    <location>
        <position position="275"/>
    </location>
    <ligand>
        <name>NAD(+)</name>
        <dbReference type="ChEBI" id="CHEBI:57540"/>
    </ligand>
</feature>
<feature type="binding site" evidence="1">
    <location>
        <begin position="276"/>
        <end position="278"/>
    </location>
    <ligand>
        <name>L-saccharopine</name>
        <dbReference type="ChEBI" id="CHEBI:57951"/>
    </ligand>
</feature>
<feature type="binding site" evidence="1">
    <location>
        <begin position="316"/>
        <end position="319"/>
    </location>
    <ligand>
        <name>NAD(+)</name>
        <dbReference type="ChEBI" id="CHEBI:57540"/>
    </ligand>
</feature>
<feature type="disulfide bond" evidence="1">
    <location>
        <begin position="202"/>
        <end position="246"/>
    </location>
</feature>
<accession>Q7SFX6</accession>
<reference key="1">
    <citation type="journal article" date="2003" name="Nature">
        <title>The genome sequence of the filamentous fungus Neurospora crassa.</title>
        <authorList>
            <person name="Galagan J.E."/>
            <person name="Calvo S.E."/>
            <person name="Borkovich K.A."/>
            <person name="Selker E.U."/>
            <person name="Read N.D."/>
            <person name="Jaffe D.B."/>
            <person name="FitzHugh W."/>
            <person name="Ma L.-J."/>
            <person name="Smirnov S."/>
            <person name="Purcell S."/>
            <person name="Rehman B."/>
            <person name="Elkins T."/>
            <person name="Engels R."/>
            <person name="Wang S."/>
            <person name="Nielsen C.B."/>
            <person name="Butler J."/>
            <person name="Endrizzi M."/>
            <person name="Qui D."/>
            <person name="Ianakiev P."/>
            <person name="Bell-Pedersen D."/>
            <person name="Nelson M.A."/>
            <person name="Werner-Washburne M."/>
            <person name="Selitrennikoff C.P."/>
            <person name="Kinsey J.A."/>
            <person name="Braun E.L."/>
            <person name="Zelter A."/>
            <person name="Schulte U."/>
            <person name="Kothe G.O."/>
            <person name="Jedd G."/>
            <person name="Mewes H.-W."/>
            <person name="Staben C."/>
            <person name="Marcotte E."/>
            <person name="Greenberg D."/>
            <person name="Roy A."/>
            <person name="Foley K."/>
            <person name="Naylor J."/>
            <person name="Stange-Thomann N."/>
            <person name="Barrett R."/>
            <person name="Gnerre S."/>
            <person name="Kamal M."/>
            <person name="Kamvysselis M."/>
            <person name="Mauceli E.W."/>
            <person name="Bielke C."/>
            <person name="Rudd S."/>
            <person name="Frishman D."/>
            <person name="Krystofova S."/>
            <person name="Rasmussen C."/>
            <person name="Metzenberg R.L."/>
            <person name="Perkins D.D."/>
            <person name="Kroken S."/>
            <person name="Cogoni C."/>
            <person name="Macino G."/>
            <person name="Catcheside D.E.A."/>
            <person name="Li W."/>
            <person name="Pratt R.J."/>
            <person name="Osmani S.A."/>
            <person name="DeSouza C.P.C."/>
            <person name="Glass N.L."/>
            <person name="Orbach M.J."/>
            <person name="Berglund J.A."/>
            <person name="Voelker R."/>
            <person name="Yarden O."/>
            <person name="Plamann M."/>
            <person name="Seiler S."/>
            <person name="Dunlap J.C."/>
            <person name="Radford A."/>
            <person name="Aramayo R."/>
            <person name="Natvig D.O."/>
            <person name="Alex L.A."/>
            <person name="Mannhaupt G."/>
            <person name="Ebbole D.J."/>
            <person name="Freitag M."/>
            <person name="Paulsen I."/>
            <person name="Sachs M.S."/>
            <person name="Lander E.S."/>
            <person name="Nusbaum C."/>
            <person name="Birren B.W."/>
        </authorList>
    </citation>
    <scope>NUCLEOTIDE SEQUENCE [LARGE SCALE GENOMIC DNA]</scope>
    <source>
        <strain>ATCC 24698 / 74-OR23-1A / CBS 708.71 / DSM 1257 / FGSC 987</strain>
    </source>
</reference>
<reference key="2">
    <citation type="journal article" date="1965" name="J. Biol. Chem.">
        <title>Saccharopine, an intermediate of the aminoadipic acid pathway of lysine biosynthesis. I. Studies in Neurospora crassa.</title>
        <authorList>
            <person name="Trupin J.S."/>
            <person name="Broquist H.P."/>
        </authorList>
    </citation>
    <scope>FUNCTION</scope>
    <scope>PATHWAY</scope>
</reference>
<protein>
    <recommendedName>
        <fullName>Saccharopine dehydrogenase [NAD(+), L-lysine-forming]</fullName>
        <shortName>SDH</shortName>
        <ecNumber>1.5.1.7</ecNumber>
    </recommendedName>
    <alternativeName>
        <fullName>Lysine--2-oxoglutarate reductase</fullName>
    </alternativeName>
</protein>
<sequence>MAPTVLHLRSETKHLEHRSALTPTTTAELIKAGYIVNVERSPERIFDDEEFEKAGATLVPEHSWVDAPKEHIIVGLKELEEKDFPLKHVHVQFAHCYKQQAGWENVLARFPRGGGTLLDLEFLVDEHGRRVAAFGFHAGFAGAALALEVWAWQLNHSEPFPGVESYPNEDALIADVKKAVKEGVEAAGRLPRVIVIGARGRCGSGAVSALKKAGIPDENILDWDMAETAKGGPFKEITDSDIFVNCIYLTSKIPNFVNMESLQVPDRQLRVVCDVSADTTSPFTPVPIYTVATTFDKPTVPVDGLTSGPPLSVISIDHLPSLLPREASEAFSHDLLPSLLTLNDWQNSPVWARAKQLFDEKVATLPESALQK</sequence>